<organism>
    <name type="scientific">Boa constrictor</name>
    <name type="common">Boa</name>
    <dbReference type="NCBI Taxonomy" id="8574"/>
    <lineage>
        <taxon>Eukaryota</taxon>
        <taxon>Metazoa</taxon>
        <taxon>Chordata</taxon>
        <taxon>Craniata</taxon>
        <taxon>Vertebrata</taxon>
        <taxon>Euteleostomi</taxon>
        <taxon>Lepidosauria</taxon>
        <taxon>Squamata</taxon>
        <taxon>Bifurcata</taxon>
        <taxon>Unidentata</taxon>
        <taxon>Episquamata</taxon>
        <taxon>Toxicofera</taxon>
        <taxon>Serpentes</taxon>
        <taxon>Henophidia</taxon>
        <taxon>Boidae</taxon>
        <taxon>Boinae</taxon>
        <taxon>Boa</taxon>
    </lineage>
</organism>
<name>CYB_BOACO</name>
<geneLocation type="mitochondrion"/>
<evidence type="ECO:0000250" key="1"/>
<evidence type="ECO:0000250" key="2">
    <source>
        <dbReference type="UniProtKB" id="P00157"/>
    </source>
</evidence>
<evidence type="ECO:0000255" key="3">
    <source>
        <dbReference type="PROSITE-ProRule" id="PRU00967"/>
    </source>
</evidence>
<evidence type="ECO:0000255" key="4">
    <source>
        <dbReference type="PROSITE-ProRule" id="PRU00968"/>
    </source>
</evidence>
<dbReference type="EMBL" id="U69740">
    <property type="protein sequence ID" value="AAD13430.1"/>
    <property type="molecule type" value="Genomic_DNA"/>
</dbReference>
<dbReference type="EMBL" id="U69745">
    <property type="protein sequence ID" value="AAC01780.1"/>
    <property type="molecule type" value="Genomic_DNA"/>
</dbReference>
<dbReference type="EMBL" id="U69746">
    <property type="protein sequence ID" value="AAD13432.1"/>
    <property type="molecule type" value="Genomic_DNA"/>
</dbReference>
<dbReference type="EMBL" id="U69748">
    <property type="protein sequence ID" value="AAC01782.1"/>
    <property type="molecule type" value="Genomic_DNA"/>
</dbReference>
<dbReference type="EMBL" id="AF039267">
    <property type="protein sequence ID" value="AAC33544.1"/>
    <property type="molecule type" value="Genomic_DNA"/>
</dbReference>
<dbReference type="SMR" id="P92848"/>
<dbReference type="GO" id="GO:0005743">
    <property type="term" value="C:mitochondrial inner membrane"/>
    <property type="evidence" value="ECO:0007669"/>
    <property type="project" value="UniProtKB-SubCell"/>
</dbReference>
<dbReference type="GO" id="GO:0045275">
    <property type="term" value="C:respiratory chain complex III"/>
    <property type="evidence" value="ECO:0007669"/>
    <property type="project" value="InterPro"/>
</dbReference>
<dbReference type="GO" id="GO:0046872">
    <property type="term" value="F:metal ion binding"/>
    <property type="evidence" value="ECO:0007669"/>
    <property type="project" value="UniProtKB-KW"/>
</dbReference>
<dbReference type="GO" id="GO:0008121">
    <property type="term" value="F:ubiquinol-cytochrome-c reductase activity"/>
    <property type="evidence" value="ECO:0007669"/>
    <property type="project" value="InterPro"/>
</dbReference>
<dbReference type="GO" id="GO:0006122">
    <property type="term" value="P:mitochondrial electron transport, ubiquinol to cytochrome c"/>
    <property type="evidence" value="ECO:0007669"/>
    <property type="project" value="TreeGrafter"/>
</dbReference>
<dbReference type="CDD" id="cd00290">
    <property type="entry name" value="cytochrome_b_C"/>
    <property type="match status" value="1"/>
</dbReference>
<dbReference type="CDD" id="cd00284">
    <property type="entry name" value="Cytochrome_b_N"/>
    <property type="match status" value="1"/>
</dbReference>
<dbReference type="Gene3D" id="1.20.810.10">
    <property type="entry name" value="Cytochrome Bc1 Complex, Chain C"/>
    <property type="match status" value="1"/>
</dbReference>
<dbReference type="InterPro" id="IPR005798">
    <property type="entry name" value="Cyt_b/b6_C"/>
</dbReference>
<dbReference type="InterPro" id="IPR036150">
    <property type="entry name" value="Cyt_b/b6_C_sf"/>
</dbReference>
<dbReference type="InterPro" id="IPR005797">
    <property type="entry name" value="Cyt_b/b6_N"/>
</dbReference>
<dbReference type="InterPro" id="IPR027387">
    <property type="entry name" value="Cytb/b6-like_sf"/>
</dbReference>
<dbReference type="InterPro" id="IPR030689">
    <property type="entry name" value="Cytochrome_b"/>
</dbReference>
<dbReference type="InterPro" id="IPR048260">
    <property type="entry name" value="Cytochrome_b_C_euk/bac"/>
</dbReference>
<dbReference type="InterPro" id="IPR048259">
    <property type="entry name" value="Cytochrome_b_N_euk/bac"/>
</dbReference>
<dbReference type="InterPro" id="IPR016174">
    <property type="entry name" value="Di-haem_cyt_TM"/>
</dbReference>
<dbReference type="PANTHER" id="PTHR19271">
    <property type="entry name" value="CYTOCHROME B"/>
    <property type="match status" value="1"/>
</dbReference>
<dbReference type="PANTHER" id="PTHR19271:SF16">
    <property type="entry name" value="CYTOCHROME B"/>
    <property type="match status" value="1"/>
</dbReference>
<dbReference type="Pfam" id="PF00032">
    <property type="entry name" value="Cytochrom_B_C"/>
    <property type="match status" value="1"/>
</dbReference>
<dbReference type="Pfam" id="PF00033">
    <property type="entry name" value="Cytochrome_B"/>
    <property type="match status" value="1"/>
</dbReference>
<dbReference type="PIRSF" id="PIRSF038885">
    <property type="entry name" value="COB"/>
    <property type="match status" value="1"/>
</dbReference>
<dbReference type="SUPFAM" id="SSF81648">
    <property type="entry name" value="a domain/subunit of cytochrome bc1 complex (Ubiquinol-cytochrome c reductase)"/>
    <property type="match status" value="1"/>
</dbReference>
<dbReference type="SUPFAM" id="SSF81342">
    <property type="entry name" value="Transmembrane di-heme cytochromes"/>
    <property type="match status" value="1"/>
</dbReference>
<dbReference type="PROSITE" id="PS51003">
    <property type="entry name" value="CYTB_CTER"/>
    <property type="match status" value="1"/>
</dbReference>
<dbReference type="PROSITE" id="PS51002">
    <property type="entry name" value="CYTB_NTER"/>
    <property type="match status" value="1"/>
</dbReference>
<sequence length="371" mass="42008">MPHQKILMLFGLLPVATNISTWWNFGSMLLTCSMIQVLTGFFLAVHYTANINLAFSSIVHIMRDVPCGWMVQNLHAIGASMFFICIYIHIARGLYYGSYLNKETWLSGTTLLIMLMATAFFGYVLPWGQMSFWAATVITNLLTAIPYLGGTMTTWLWGGFAINDPTLTRFFALHFILPFGIISLSSLHVLLLHEEGSSNPLGTNSDIDKIPFHPYHTMKDLLMLTTTLTLLLMTISFFPDIFNDPENFSKANPLVTPQHIKPEWYFLFAYGILRSIPNKLGGALALAMSIMILFTVPFIHTSKLRSMTFRPLMQLMFWTFTSTFVLITWAATKPVEPPFISISQVASIIYFTFFISNPILGWAENKIMKNT</sequence>
<keyword id="KW-0249">Electron transport</keyword>
<keyword id="KW-0349">Heme</keyword>
<keyword id="KW-0408">Iron</keyword>
<keyword id="KW-0472">Membrane</keyword>
<keyword id="KW-0479">Metal-binding</keyword>
<keyword id="KW-0496">Mitochondrion</keyword>
<keyword id="KW-0999">Mitochondrion inner membrane</keyword>
<keyword id="KW-0679">Respiratory chain</keyword>
<keyword id="KW-0812">Transmembrane</keyword>
<keyword id="KW-1133">Transmembrane helix</keyword>
<keyword id="KW-0813">Transport</keyword>
<keyword id="KW-0830">Ubiquinone</keyword>
<gene>
    <name type="primary">MT-CYB</name>
    <name type="synonym">COB</name>
    <name type="synonym">CYTB</name>
    <name type="synonym">MTCYB</name>
</gene>
<protein>
    <recommendedName>
        <fullName>Cytochrome b</fullName>
    </recommendedName>
    <alternativeName>
        <fullName>Complex III subunit 3</fullName>
    </alternativeName>
    <alternativeName>
        <fullName>Complex III subunit III</fullName>
    </alternativeName>
    <alternativeName>
        <fullName>Cytochrome b-c1 complex subunit 3</fullName>
    </alternativeName>
    <alternativeName>
        <fullName>Ubiquinol-cytochrome-c reductase complex cytochrome b subunit</fullName>
    </alternativeName>
</protein>
<reference key="1">
    <citation type="thesis" date="1997" institute="Queen's University / Kingston" country="Canada">
        <title>Hic Sunt Serpentes -- molecular phylogenetics and the Boidae (Serpentes: Booidea).</title>
        <authorList>
            <person name="Campbell B.N."/>
        </authorList>
    </citation>
    <scope>NUCLEOTIDE SEQUENCE [GENOMIC DNA]</scope>
</reference>
<reference key="2">
    <citation type="journal article" date="1998" name="Mol. Phylogenet. Evol.">
        <title>Weighting and congruence: a case study based on three mitochondrial genes in pitvipers.</title>
        <authorList>
            <person name="Vidal N."/>
            <person name="Lecointre G."/>
        </authorList>
    </citation>
    <scope>NUCLEOTIDE SEQUENCE [GENOMIC DNA] OF 1-208</scope>
</reference>
<reference key="3">
    <citation type="journal article" date="1997" name="C. R. Acad. Sci. III, Sci. Vie">
        <title>Molecular systematics of pitvipers: paraphyly of the Bothrops complex.</title>
        <authorList>
            <person name="Vidal N."/>
            <person name="Lecointre G."/>
            <person name="Vie J.-C."/>
            <person name="Gasc J.-P."/>
        </authorList>
    </citation>
    <scope>NUCLEOTIDE SEQUENCE [GENOMIC DNA] OF 1-132</scope>
</reference>
<proteinExistence type="inferred from homology"/>
<comment type="function">
    <text evidence="2">Component of the ubiquinol-cytochrome c reductase complex (complex III or cytochrome b-c1 complex) that is part of the mitochondrial respiratory chain. The b-c1 complex mediates electron transfer from ubiquinol to cytochrome c. Contributes to the generation of a proton gradient across the mitochondrial membrane that is then used for ATP synthesis.</text>
</comment>
<comment type="cofactor">
    <cofactor evidence="2">
        <name>heme b</name>
        <dbReference type="ChEBI" id="CHEBI:60344"/>
    </cofactor>
    <text evidence="2">Binds 2 heme b groups non-covalently.</text>
</comment>
<comment type="subunit">
    <text evidence="2">The cytochrome bc1 complex contains 3 respiratory subunits (MT-CYB, CYC1 and UQCRFS1), 2 core proteins (UQCRC1 and UQCRC2) and probably 6 low-molecular weight proteins.</text>
</comment>
<comment type="subcellular location">
    <subcellularLocation>
        <location evidence="2">Mitochondrion inner membrane</location>
        <topology evidence="2">Multi-pass membrane protein</topology>
    </subcellularLocation>
</comment>
<comment type="miscellaneous">
    <text evidence="1">Heme 1 (or BL or b562) is low-potential and absorbs at about 562 nm, and heme 2 (or BH or b566) is high-potential and absorbs at about 566 nm.</text>
</comment>
<comment type="similarity">
    <text evidence="3 4">Belongs to the cytochrome b family.</text>
</comment>
<comment type="caution">
    <text evidence="2">The full-length protein contains only eight transmembrane helices, not nine as predicted by bioinformatics tools.</text>
</comment>
<accession>P92848</accession>
<accession>O48016</accession>
<accession>O48019</accession>
<feature type="chain" id="PRO_0000060678" description="Cytochrome b">
    <location>
        <begin position="1"/>
        <end position="371"/>
    </location>
</feature>
<feature type="transmembrane region" description="Helical" evidence="2">
    <location>
        <begin position="25"/>
        <end position="45"/>
    </location>
</feature>
<feature type="transmembrane region" description="Helical" evidence="2">
    <location>
        <begin position="69"/>
        <end position="90"/>
    </location>
</feature>
<feature type="transmembrane region" description="Helical" evidence="2">
    <location>
        <begin position="105"/>
        <end position="125"/>
    </location>
</feature>
<feature type="transmembrane region" description="Helical" evidence="2">
    <location>
        <begin position="170"/>
        <end position="190"/>
    </location>
</feature>
<feature type="transmembrane region" description="Helical" evidence="2">
    <location>
        <begin position="218"/>
        <end position="238"/>
    </location>
</feature>
<feature type="transmembrane region" description="Helical" evidence="2">
    <location>
        <begin position="280"/>
        <end position="300"/>
    </location>
</feature>
<feature type="transmembrane region" description="Helical" evidence="2">
    <location>
        <begin position="312"/>
        <end position="332"/>
    </location>
</feature>
<feature type="transmembrane region" description="Helical" evidence="2">
    <location>
        <begin position="339"/>
        <end position="358"/>
    </location>
</feature>
<feature type="binding site" description="axial binding residue" evidence="2">
    <location>
        <position position="75"/>
    </location>
    <ligand>
        <name>heme b</name>
        <dbReference type="ChEBI" id="CHEBI:60344"/>
        <label>b562</label>
    </ligand>
    <ligandPart>
        <name>Fe</name>
        <dbReference type="ChEBI" id="CHEBI:18248"/>
    </ligandPart>
</feature>
<feature type="binding site" description="axial binding residue" evidence="2">
    <location>
        <position position="89"/>
    </location>
    <ligand>
        <name>heme b</name>
        <dbReference type="ChEBI" id="CHEBI:60344"/>
        <label>b566</label>
    </ligand>
    <ligandPart>
        <name>Fe</name>
        <dbReference type="ChEBI" id="CHEBI:18248"/>
    </ligandPart>
</feature>
<feature type="binding site" description="axial binding residue" evidence="2">
    <location>
        <position position="174"/>
    </location>
    <ligand>
        <name>heme b</name>
        <dbReference type="ChEBI" id="CHEBI:60344"/>
        <label>b562</label>
    </ligand>
    <ligandPart>
        <name>Fe</name>
        <dbReference type="ChEBI" id="CHEBI:18248"/>
    </ligandPart>
</feature>
<feature type="binding site" description="axial binding residue" evidence="2">
    <location>
        <position position="188"/>
    </location>
    <ligand>
        <name>heme b</name>
        <dbReference type="ChEBI" id="CHEBI:60344"/>
        <label>b566</label>
    </ligand>
    <ligandPart>
        <name>Fe</name>
        <dbReference type="ChEBI" id="CHEBI:18248"/>
    </ligandPart>
</feature>
<feature type="binding site" evidence="2">
    <location>
        <position position="193"/>
    </location>
    <ligand>
        <name>a ubiquinone</name>
        <dbReference type="ChEBI" id="CHEBI:16389"/>
    </ligand>
</feature>
<feature type="sequence variant">
    <original>C</original>
    <variation>Y</variation>
    <location>
        <position position="67"/>
    </location>
</feature>
<feature type="sequence variant">
    <original>I</original>
    <variation>M</variation>
    <location>
        <position position="77"/>
    </location>
</feature>
<feature type="sequence variant">
    <original>I</original>
    <variation>T</variation>
    <location>
        <position position="88"/>
    </location>
</feature>
<feature type="sequence variant">
    <original>G</original>
    <variation>N</variation>
    <location>
        <position position="150"/>
    </location>
</feature>
<feature type="sequence variant">
    <original>L</original>
    <variation>F</variation>
    <location>
        <position position="222"/>
    </location>
</feature>
<feature type="sequence variant">
    <original>T</original>
    <variation>A</variation>
    <location>
        <position position="225"/>
    </location>
</feature>
<feature type="sequence variant">
    <original>L</original>
    <variation>F</variation>
    <location>
        <position position="228"/>
    </location>
</feature>
<feature type="sequence variant">
    <original>S</original>
    <variation>T</variation>
    <location>
        <position position="341"/>
    </location>
</feature>